<keyword id="KW-0143">Chaperone</keyword>
<keyword id="KW-0963">Cytoplasm</keyword>
<keyword id="KW-0690">Ribosome biogenesis</keyword>
<keyword id="KW-0698">rRNA processing</keyword>
<name>RIMM_NEIMF</name>
<reference key="1">
    <citation type="journal article" date="2007" name="PLoS Genet.">
        <title>Meningococcal genetic variation mechanisms viewed through comparative analysis of serogroup C strain FAM18.</title>
        <authorList>
            <person name="Bentley S.D."/>
            <person name="Vernikos G.S."/>
            <person name="Snyder L.A.S."/>
            <person name="Churcher C."/>
            <person name="Arrowsmith C."/>
            <person name="Chillingworth T."/>
            <person name="Cronin A."/>
            <person name="Davis P.H."/>
            <person name="Holroyd N.E."/>
            <person name="Jagels K."/>
            <person name="Maddison M."/>
            <person name="Moule S."/>
            <person name="Rabbinowitsch E."/>
            <person name="Sharp S."/>
            <person name="Unwin L."/>
            <person name="Whitehead S."/>
            <person name="Quail M.A."/>
            <person name="Achtman M."/>
            <person name="Barrell B.G."/>
            <person name="Saunders N.J."/>
            <person name="Parkhill J."/>
        </authorList>
    </citation>
    <scope>NUCLEOTIDE SEQUENCE [LARGE SCALE GENOMIC DNA]</scope>
    <source>
        <strain>ATCC 700532 / DSM 15464 / FAM18</strain>
    </source>
</reference>
<organism>
    <name type="scientific">Neisseria meningitidis serogroup C / serotype 2a (strain ATCC 700532 / DSM 15464 / FAM18)</name>
    <dbReference type="NCBI Taxonomy" id="272831"/>
    <lineage>
        <taxon>Bacteria</taxon>
        <taxon>Pseudomonadati</taxon>
        <taxon>Pseudomonadota</taxon>
        <taxon>Betaproteobacteria</taxon>
        <taxon>Neisseriales</taxon>
        <taxon>Neisseriaceae</taxon>
        <taxon>Neisseria</taxon>
    </lineage>
</organism>
<accession>A1KSK0</accession>
<gene>
    <name evidence="1" type="primary">rimM</name>
    <name type="ordered locus">NMC0533</name>
</gene>
<dbReference type="EMBL" id="AM421808">
    <property type="protein sequence ID" value="CAM09830.1"/>
    <property type="molecule type" value="Genomic_DNA"/>
</dbReference>
<dbReference type="RefSeq" id="WP_002217806.1">
    <property type="nucleotide sequence ID" value="NC_008767.1"/>
</dbReference>
<dbReference type="SMR" id="A1KSK0"/>
<dbReference type="KEGG" id="nmc:NMC0533"/>
<dbReference type="HOGENOM" id="CLU_077636_1_0_4"/>
<dbReference type="Proteomes" id="UP000002286">
    <property type="component" value="Chromosome"/>
</dbReference>
<dbReference type="GO" id="GO:0005737">
    <property type="term" value="C:cytoplasm"/>
    <property type="evidence" value="ECO:0007669"/>
    <property type="project" value="UniProtKB-SubCell"/>
</dbReference>
<dbReference type="GO" id="GO:0005840">
    <property type="term" value="C:ribosome"/>
    <property type="evidence" value="ECO:0007669"/>
    <property type="project" value="InterPro"/>
</dbReference>
<dbReference type="GO" id="GO:0043022">
    <property type="term" value="F:ribosome binding"/>
    <property type="evidence" value="ECO:0007669"/>
    <property type="project" value="InterPro"/>
</dbReference>
<dbReference type="GO" id="GO:0042274">
    <property type="term" value="P:ribosomal small subunit biogenesis"/>
    <property type="evidence" value="ECO:0007669"/>
    <property type="project" value="UniProtKB-UniRule"/>
</dbReference>
<dbReference type="GO" id="GO:0006364">
    <property type="term" value="P:rRNA processing"/>
    <property type="evidence" value="ECO:0007669"/>
    <property type="project" value="UniProtKB-UniRule"/>
</dbReference>
<dbReference type="Gene3D" id="2.30.30.240">
    <property type="entry name" value="PRC-barrel domain"/>
    <property type="match status" value="1"/>
</dbReference>
<dbReference type="Gene3D" id="2.40.30.60">
    <property type="entry name" value="RimM"/>
    <property type="match status" value="1"/>
</dbReference>
<dbReference type="HAMAP" id="MF_00014">
    <property type="entry name" value="Ribosome_mat_RimM"/>
    <property type="match status" value="1"/>
</dbReference>
<dbReference type="InterPro" id="IPR011033">
    <property type="entry name" value="PRC_barrel-like_sf"/>
</dbReference>
<dbReference type="InterPro" id="IPR056792">
    <property type="entry name" value="PRC_RimM"/>
</dbReference>
<dbReference type="InterPro" id="IPR011961">
    <property type="entry name" value="RimM"/>
</dbReference>
<dbReference type="InterPro" id="IPR002676">
    <property type="entry name" value="RimM_N"/>
</dbReference>
<dbReference type="InterPro" id="IPR036976">
    <property type="entry name" value="RimM_N_sf"/>
</dbReference>
<dbReference type="InterPro" id="IPR009000">
    <property type="entry name" value="Transl_B-barrel_sf"/>
</dbReference>
<dbReference type="NCBIfam" id="TIGR02273">
    <property type="entry name" value="16S_RimM"/>
    <property type="match status" value="1"/>
</dbReference>
<dbReference type="PANTHER" id="PTHR33692">
    <property type="entry name" value="RIBOSOME MATURATION FACTOR RIMM"/>
    <property type="match status" value="1"/>
</dbReference>
<dbReference type="PANTHER" id="PTHR33692:SF1">
    <property type="entry name" value="RIBOSOME MATURATION FACTOR RIMM"/>
    <property type="match status" value="1"/>
</dbReference>
<dbReference type="Pfam" id="PF24986">
    <property type="entry name" value="PRC_RimM"/>
    <property type="match status" value="1"/>
</dbReference>
<dbReference type="Pfam" id="PF01782">
    <property type="entry name" value="RimM"/>
    <property type="match status" value="1"/>
</dbReference>
<dbReference type="SUPFAM" id="SSF50346">
    <property type="entry name" value="PRC-barrel domain"/>
    <property type="match status" value="1"/>
</dbReference>
<dbReference type="SUPFAM" id="SSF50447">
    <property type="entry name" value="Translation proteins"/>
    <property type="match status" value="1"/>
</dbReference>
<feature type="chain" id="PRO_1000001204" description="Ribosome maturation factor RimM">
    <location>
        <begin position="1"/>
        <end position="169"/>
    </location>
</feature>
<feature type="domain" description="PRC barrel" evidence="1">
    <location>
        <begin position="97"/>
        <end position="169"/>
    </location>
</feature>
<sequence>MTDTQNRVAMGYIKGVFGIKGWLKIAANTEYSDSLLDYPEWHLVKDGKTVSVTLEAGKVVNSELQVKFEGINDRDLAFSLRGYTIEIPREAFAPTEEDEYYWTDLVGMTVVNKDHTVLGKVSNLMETGANDVLMIDGEHGQILIPFVSQYIETVDTGSKIITADWGLDY</sequence>
<protein>
    <recommendedName>
        <fullName evidence="1">Ribosome maturation factor RimM</fullName>
    </recommendedName>
</protein>
<comment type="function">
    <text evidence="1">An accessory protein needed during the final step in the assembly of 30S ribosomal subunit, possibly for assembly of the head region. Essential for efficient processing of 16S rRNA. May be needed both before and after RbfA during the maturation of 16S rRNA. It has affinity for free ribosomal 30S subunits but not for 70S ribosomes.</text>
</comment>
<comment type="subunit">
    <text evidence="1">Binds ribosomal protein uS19.</text>
</comment>
<comment type="subcellular location">
    <subcellularLocation>
        <location evidence="1">Cytoplasm</location>
    </subcellularLocation>
</comment>
<comment type="domain">
    <text evidence="1">The PRC barrel domain binds ribosomal protein uS19.</text>
</comment>
<comment type="similarity">
    <text evidence="1">Belongs to the RimM family.</text>
</comment>
<proteinExistence type="inferred from homology"/>
<evidence type="ECO:0000255" key="1">
    <source>
        <dbReference type="HAMAP-Rule" id="MF_00014"/>
    </source>
</evidence>